<protein>
    <recommendedName>
        <fullName evidence="1">ATP synthase subunit alpha</fullName>
        <ecNumber evidence="1">7.1.2.2</ecNumber>
    </recommendedName>
    <alternativeName>
        <fullName evidence="1">ATP synthase F1 sector subunit alpha</fullName>
    </alternativeName>
    <alternativeName>
        <fullName evidence="1">F-ATPase subunit alpha</fullName>
    </alternativeName>
</protein>
<proteinExistence type="inferred from homology"/>
<accession>A4IW22</accession>
<feature type="chain" id="PRO_0000302649" description="ATP synthase subunit alpha">
    <location>
        <begin position="1"/>
        <end position="513"/>
    </location>
</feature>
<feature type="binding site" evidence="1">
    <location>
        <begin position="169"/>
        <end position="176"/>
    </location>
    <ligand>
        <name>ATP</name>
        <dbReference type="ChEBI" id="CHEBI:30616"/>
    </ligand>
</feature>
<feature type="site" description="Required for activity" evidence="1">
    <location>
        <position position="373"/>
    </location>
</feature>
<name>ATPA_FRATW</name>
<gene>
    <name evidence="1" type="primary">atpA</name>
    <name type="ordered locus">FTW_0138</name>
</gene>
<dbReference type="EC" id="7.1.2.2" evidence="1"/>
<dbReference type="EMBL" id="CP000608">
    <property type="protein sequence ID" value="ABO46124.1"/>
    <property type="molecule type" value="Genomic_DNA"/>
</dbReference>
<dbReference type="RefSeq" id="WP_003024607.1">
    <property type="nucleotide sequence ID" value="NC_009257.1"/>
</dbReference>
<dbReference type="SMR" id="A4IW22"/>
<dbReference type="KEGG" id="ftw:FTW_0138"/>
<dbReference type="HOGENOM" id="CLU_010091_2_1_6"/>
<dbReference type="GO" id="GO:0005886">
    <property type="term" value="C:plasma membrane"/>
    <property type="evidence" value="ECO:0007669"/>
    <property type="project" value="UniProtKB-SubCell"/>
</dbReference>
<dbReference type="GO" id="GO:0045259">
    <property type="term" value="C:proton-transporting ATP synthase complex"/>
    <property type="evidence" value="ECO:0007669"/>
    <property type="project" value="UniProtKB-KW"/>
</dbReference>
<dbReference type="GO" id="GO:0043531">
    <property type="term" value="F:ADP binding"/>
    <property type="evidence" value="ECO:0007669"/>
    <property type="project" value="TreeGrafter"/>
</dbReference>
<dbReference type="GO" id="GO:0005524">
    <property type="term" value="F:ATP binding"/>
    <property type="evidence" value="ECO:0007669"/>
    <property type="project" value="UniProtKB-UniRule"/>
</dbReference>
<dbReference type="GO" id="GO:0046933">
    <property type="term" value="F:proton-transporting ATP synthase activity, rotational mechanism"/>
    <property type="evidence" value="ECO:0007669"/>
    <property type="project" value="UniProtKB-UniRule"/>
</dbReference>
<dbReference type="CDD" id="cd18113">
    <property type="entry name" value="ATP-synt_F1_alpha_C"/>
    <property type="match status" value="1"/>
</dbReference>
<dbReference type="CDD" id="cd18116">
    <property type="entry name" value="ATP-synt_F1_alpha_N"/>
    <property type="match status" value="1"/>
</dbReference>
<dbReference type="CDD" id="cd01132">
    <property type="entry name" value="F1-ATPase_alpha_CD"/>
    <property type="match status" value="1"/>
</dbReference>
<dbReference type="FunFam" id="1.20.150.20:FF:000001">
    <property type="entry name" value="ATP synthase subunit alpha"/>
    <property type="match status" value="1"/>
</dbReference>
<dbReference type="FunFam" id="2.40.30.20:FF:000001">
    <property type="entry name" value="ATP synthase subunit alpha"/>
    <property type="match status" value="1"/>
</dbReference>
<dbReference type="FunFam" id="3.40.50.300:FF:000002">
    <property type="entry name" value="ATP synthase subunit alpha"/>
    <property type="match status" value="1"/>
</dbReference>
<dbReference type="Gene3D" id="2.40.30.20">
    <property type="match status" value="1"/>
</dbReference>
<dbReference type="Gene3D" id="1.20.150.20">
    <property type="entry name" value="ATP synthase alpha/beta chain, C-terminal domain"/>
    <property type="match status" value="1"/>
</dbReference>
<dbReference type="Gene3D" id="3.40.50.300">
    <property type="entry name" value="P-loop containing nucleotide triphosphate hydrolases"/>
    <property type="match status" value="1"/>
</dbReference>
<dbReference type="HAMAP" id="MF_01346">
    <property type="entry name" value="ATP_synth_alpha_bact"/>
    <property type="match status" value="1"/>
</dbReference>
<dbReference type="InterPro" id="IPR023366">
    <property type="entry name" value="ATP_synth_asu-like_sf"/>
</dbReference>
<dbReference type="InterPro" id="IPR000793">
    <property type="entry name" value="ATP_synth_asu_C"/>
</dbReference>
<dbReference type="InterPro" id="IPR038376">
    <property type="entry name" value="ATP_synth_asu_C_sf"/>
</dbReference>
<dbReference type="InterPro" id="IPR033732">
    <property type="entry name" value="ATP_synth_F1_a_nt-bd_dom"/>
</dbReference>
<dbReference type="InterPro" id="IPR005294">
    <property type="entry name" value="ATP_synth_F1_asu"/>
</dbReference>
<dbReference type="InterPro" id="IPR020003">
    <property type="entry name" value="ATPase_a/bsu_AS"/>
</dbReference>
<dbReference type="InterPro" id="IPR004100">
    <property type="entry name" value="ATPase_F1/V1/A1_a/bsu_N"/>
</dbReference>
<dbReference type="InterPro" id="IPR036121">
    <property type="entry name" value="ATPase_F1/V1/A1_a/bsu_N_sf"/>
</dbReference>
<dbReference type="InterPro" id="IPR000194">
    <property type="entry name" value="ATPase_F1/V1/A1_a/bsu_nucl-bd"/>
</dbReference>
<dbReference type="InterPro" id="IPR027417">
    <property type="entry name" value="P-loop_NTPase"/>
</dbReference>
<dbReference type="NCBIfam" id="TIGR00962">
    <property type="entry name" value="atpA"/>
    <property type="match status" value="1"/>
</dbReference>
<dbReference type="NCBIfam" id="NF009884">
    <property type="entry name" value="PRK13343.1"/>
    <property type="match status" value="1"/>
</dbReference>
<dbReference type="PANTHER" id="PTHR48082">
    <property type="entry name" value="ATP SYNTHASE SUBUNIT ALPHA, MITOCHONDRIAL"/>
    <property type="match status" value="1"/>
</dbReference>
<dbReference type="PANTHER" id="PTHR48082:SF2">
    <property type="entry name" value="ATP SYNTHASE SUBUNIT ALPHA, MITOCHONDRIAL"/>
    <property type="match status" value="1"/>
</dbReference>
<dbReference type="Pfam" id="PF00006">
    <property type="entry name" value="ATP-synt_ab"/>
    <property type="match status" value="1"/>
</dbReference>
<dbReference type="Pfam" id="PF00306">
    <property type="entry name" value="ATP-synt_ab_C"/>
    <property type="match status" value="1"/>
</dbReference>
<dbReference type="Pfam" id="PF02874">
    <property type="entry name" value="ATP-synt_ab_N"/>
    <property type="match status" value="1"/>
</dbReference>
<dbReference type="PIRSF" id="PIRSF039088">
    <property type="entry name" value="F_ATPase_subunit_alpha"/>
    <property type="match status" value="1"/>
</dbReference>
<dbReference type="SUPFAM" id="SSF47917">
    <property type="entry name" value="C-terminal domain of alpha and beta subunits of F1 ATP synthase"/>
    <property type="match status" value="1"/>
</dbReference>
<dbReference type="SUPFAM" id="SSF50615">
    <property type="entry name" value="N-terminal domain of alpha and beta subunits of F1 ATP synthase"/>
    <property type="match status" value="1"/>
</dbReference>
<dbReference type="SUPFAM" id="SSF52540">
    <property type="entry name" value="P-loop containing nucleoside triphosphate hydrolases"/>
    <property type="match status" value="1"/>
</dbReference>
<dbReference type="PROSITE" id="PS00152">
    <property type="entry name" value="ATPASE_ALPHA_BETA"/>
    <property type="match status" value="1"/>
</dbReference>
<evidence type="ECO:0000255" key="1">
    <source>
        <dbReference type="HAMAP-Rule" id="MF_01346"/>
    </source>
</evidence>
<keyword id="KW-0066">ATP synthesis</keyword>
<keyword id="KW-0067">ATP-binding</keyword>
<keyword id="KW-0997">Cell inner membrane</keyword>
<keyword id="KW-1003">Cell membrane</keyword>
<keyword id="KW-0139">CF(1)</keyword>
<keyword id="KW-0375">Hydrogen ion transport</keyword>
<keyword id="KW-0406">Ion transport</keyword>
<keyword id="KW-0472">Membrane</keyword>
<keyword id="KW-0547">Nucleotide-binding</keyword>
<keyword id="KW-1278">Translocase</keyword>
<keyword id="KW-0813">Transport</keyword>
<comment type="function">
    <text evidence="1">Produces ATP from ADP in the presence of a proton gradient across the membrane. The alpha chain is a regulatory subunit.</text>
</comment>
<comment type="catalytic activity">
    <reaction evidence="1">
        <text>ATP + H2O + 4 H(+)(in) = ADP + phosphate + 5 H(+)(out)</text>
        <dbReference type="Rhea" id="RHEA:57720"/>
        <dbReference type="ChEBI" id="CHEBI:15377"/>
        <dbReference type="ChEBI" id="CHEBI:15378"/>
        <dbReference type="ChEBI" id="CHEBI:30616"/>
        <dbReference type="ChEBI" id="CHEBI:43474"/>
        <dbReference type="ChEBI" id="CHEBI:456216"/>
        <dbReference type="EC" id="7.1.2.2"/>
    </reaction>
</comment>
<comment type="subunit">
    <text evidence="1">F-type ATPases have 2 components, CF(1) - the catalytic core - and CF(0) - the membrane proton channel. CF(1) has five subunits: alpha(3), beta(3), gamma(1), delta(1), epsilon(1). CF(0) has three main subunits: a(1), b(2) and c(9-12). The alpha and beta chains form an alternating ring which encloses part of the gamma chain. CF(1) is attached to CF(0) by a central stalk formed by the gamma and epsilon chains, while a peripheral stalk is formed by the delta and b chains.</text>
</comment>
<comment type="subcellular location">
    <subcellularLocation>
        <location evidence="1">Cell inner membrane</location>
        <topology evidence="1">Peripheral membrane protein</topology>
    </subcellularLocation>
</comment>
<comment type="similarity">
    <text evidence="1">Belongs to the ATPase alpha/beta chains family.</text>
</comment>
<sequence>MQLSPSEISGLIKQRIEKFDNSVELKSEGTIVSVADGIVTIYGLNDVAAGEMIKLPGDVYGLALNLNTDSVGAVVLGDYEHIKEGDKAYCIGRILEVPVGEALLGRVVDALGNPIDGKGEVATDLTSPIEKIAPGVIWRKSVDQALQTGIKSIDSMVPIGRGQRELIIGDRQIGKTAIAVDTIINQKGTGVKCIYVAIGQKASTIANIVRQLEEHGAMEHTIIVAATASDSAALQYIAPYAGCSMGEYFRDRGQDALIVYDDLTKQAWAYRQISLLLRRPPGREAYPGDVFYLHSRLLERAARVNEEYVEKFTNGEVKGKTGSLTALPIIETQAGDISAFVPTNVISITDGQIFLETDLFNSGLRPAINPGNSVSRVGGAAQTKIIKKLGGGIRLALAQYRELEAFSQFASDLDEATRAQLNRGQRVTELLKQKQFSTLSVALMALSLYAADNGYLDNLEVSEVIPFESALHALAETKYSDVIAEINETGKYDADIADKLKIIVEDCKANQAW</sequence>
<reference key="1">
    <citation type="journal article" date="2007" name="PLoS ONE">
        <title>Complete genomic characterization of a pathogenic A.II strain of Francisella tularensis subspecies tularensis.</title>
        <authorList>
            <person name="Beckstrom-Sternberg S.M."/>
            <person name="Auerbach R.K."/>
            <person name="Godbole S."/>
            <person name="Pearson J.V."/>
            <person name="Beckstrom-Sternberg J.S."/>
            <person name="Deng Z."/>
            <person name="Munk C."/>
            <person name="Kubota K."/>
            <person name="Zhou Y."/>
            <person name="Bruce D."/>
            <person name="Noronha J."/>
            <person name="Scheuermann R.H."/>
            <person name="Wang A."/>
            <person name="Wei X."/>
            <person name="Wang J."/>
            <person name="Hao J."/>
            <person name="Wagner D.M."/>
            <person name="Brettin T.S."/>
            <person name="Brown N."/>
            <person name="Gilna P."/>
            <person name="Keim P.S."/>
        </authorList>
    </citation>
    <scope>NUCLEOTIDE SEQUENCE [LARGE SCALE GENOMIC DNA]</scope>
    <source>
        <strain>WY96-3418</strain>
    </source>
</reference>
<organism>
    <name type="scientific">Francisella tularensis subsp. tularensis (strain WY96-3418)</name>
    <dbReference type="NCBI Taxonomy" id="418136"/>
    <lineage>
        <taxon>Bacteria</taxon>
        <taxon>Pseudomonadati</taxon>
        <taxon>Pseudomonadota</taxon>
        <taxon>Gammaproteobacteria</taxon>
        <taxon>Thiotrichales</taxon>
        <taxon>Francisellaceae</taxon>
        <taxon>Francisella</taxon>
    </lineage>
</organism>